<proteinExistence type="inferred from homology"/>
<protein>
    <recommendedName>
        <fullName>Eukaryotic peptide chain release factor subunit 1</fullName>
        <shortName>Eukaryotic release factor 1</shortName>
        <shortName>eRF1</shortName>
    </recommendedName>
</protein>
<sequence length="452" mass="51007">MTDHELSESEKAIERYKVKKLIQMLESARGMGTSVISIYMTPKEQISGMVTKLNNEYGTASNIKSHTNKLSVQSAITASLGRLKQYNRLPPNGLLLYCGTVLTAENKEKKLTLDIEPFKPVSRSLYLCDNKFHTEELHRMLESDEKFGFIVVDGSGTTYATLCGSVKEKLSSFTVELPKKHGRGGQSKNRFARIRMERRHNYLRKVAEGATQLFITNDRPNIVGLVLAGSAEFKEVLYQSDLFDPRLKAIVVKVVDVAHPGDVGLNQAIDLAADALSGVKLVQEKKLLQGFFDQIACDTQLYCFGVQDTLKCLEAGAVETLIVYEDLNIYRYTVVKNRGADDEETFVHVMSEEEAKRSNIHMQESGKTRNEIEQEDFVDWLATNYRKFGCALELITNRSQEGTQFVRGFGGIGGVLRYKLDIIALRDVEKKEDDEERIAANNEEFDFDDDFM</sequence>
<dbReference type="EMBL" id="AF278718">
    <property type="protein sequence ID" value="AAF86346.1"/>
    <property type="molecule type" value="Genomic_DNA"/>
</dbReference>
<dbReference type="SMR" id="Q9NAX8"/>
<dbReference type="GO" id="GO:0005737">
    <property type="term" value="C:cytoplasm"/>
    <property type="evidence" value="ECO:0007669"/>
    <property type="project" value="UniProtKB-SubCell"/>
</dbReference>
<dbReference type="GO" id="GO:0003729">
    <property type="term" value="F:mRNA binding"/>
    <property type="evidence" value="ECO:0000314"/>
    <property type="project" value="GeneDB"/>
</dbReference>
<dbReference type="GO" id="GO:0003747">
    <property type="term" value="F:translation release factor activity"/>
    <property type="evidence" value="ECO:0007669"/>
    <property type="project" value="InterPro"/>
</dbReference>
<dbReference type="GO" id="GO:0010608">
    <property type="term" value="P:post-transcriptional regulation of gene expression"/>
    <property type="evidence" value="ECO:0000314"/>
    <property type="project" value="GeneDB"/>
</dbReference>
<dbReference type="FunFam" id="3.30.1330.30:FF:000006">
    <property type="entry name" value="Peptide chain release factor subunit 1"/>
    <property type="match status" value="1"/>
</dbReference>
<dbReference type="FunFam" id="3.30.420.60:FF:000003">
    <property type="entry name" value="Peptide chain release factor subunit 1"/>
    <property type="match status" value="1"/>
</dbReference>
<dbReference type="FunFam" id="3.30.960.10:FF:000003">
    <property type="entry name" value="Peptide chain release factor subunit 1"/>
    <property type="match status" value="1"/>
</dbReference>
<dbReference type="Gene3D" id="3.30.1330.30">
    <property type="match status" value="1"/>
</dbReference>
<dbReference type="Gene3D" id="3.30.960.10">
    <property type="entry name" value="eRF1 domain 1"/>
    <property type="match status" value="1"/>
</dbReference>
<dbReference type="Gene3D" id="3.30.420.60">
    <property type="entry name" value="eRF1 domain 2"/>
    <property type="match status" value="1"/>
</dbReference>
<dbReference type="InterPro" id="IPR042226">
    <property type="entry name" value="eFR1_2_sf"/>
</dbReference>
<dbReference type="InterPro" id="IPR005140">
    <property type="entry name" value="eRF1_1_Pelota"/>
</dbReference>
<dbReference type="InterPro" id="IPR024049">
    <property type="entry name" value="eRF1_1_sf"/>
</dbReference>
<dbReference type="InterPro" id="IPR005141">
    <property type="entry name" value="eRF1_2"/>
</dbReference>
<dbReference type="InterPro" id="IPR005142">
    <property type="entry name" value="eRF1_3"/>
</dbReference>
<dbReference type="InterPro" id="IPR004403">
    <property type="entry name" value="Peptide_chain-rel_eRF1/aRF1"/>
</dbReference>
<dbReference type="InterPro" id="IPR029064">
    <property type="entry name" value="Ribosomal_eL30-like_sf"/>
</dbReference>
<dbReference type="NCBIfam" id="TIGR03676">
    <property type="entry name" value="aRF1_eRF1"/>
    <property type="match status" value="1"/>
</dbReference>
<dbReference type="PANTHER" id="PTHR10113">
    <property type="entry name" value="PEPTIDE CHAIN RELEASE FACTOR SUBUNIT 1"/>
    <property type="match status" value="1"/>
</dbReference>
<dbReference type="Pfam" id="PF03463">
    <property type="entry name" value="eRF1_1"/>
    <property type="match status" value="1"/>
</dbReference>
<dbReference type="Pfam" id="PF03464">
    <property type="entry name" value="eRF1_2"/>
    <property type="match status" value="1"/>
</dbReference>
<dbReference type="Pfam" id="PF03465">
    <property type="entry name" value="eRF1_3"/>
    <property type="match status" value="1"/>
</dbReference>
<dbReference type="SMART" id="SM01194">
    <property type="entry name" value="eRF1_1"/>
    <property type="match status" value="1"/>
</dbReference>
<dbReference type="SUPFAM" id="SSF55315">
    <property type="entry name" value="L30e-like"/>
    <property type="match status" value="1"/>
</dbReference>
<dbReference type="SUPFAM" id="SSF55481">
    <property type="entry name" value="N-terminal domain of eukaryotic peptide chain release factor subunit 1, ERF1"/>
    <property type="match status" value="1"/>
</dbReference>
<dbReference type="SUPFAM" id="SSF53137">
    <property type="entry name" value="Translational machinery components"/>
    <property type="match status" value="1"/>
</dbReference>
<gene>
    <name type="primary">ERF1</name>
</gene>
<accession>Q9NAX8</accession>
<comment type="function">
    <text evidence="1">Directs the termination of nascent peptide synthesis (translation) in response to the termination codons UAA, UAG and UGA.</text>
</comment>
<comment type="subunit">
    <text>Heterodimer of two subunits, one of which binds GTP.</text>
</comment>
<comment type="subcellular location">
    <subcellularLocation>
        <location evidence="1">Cytoplasm</location>
    </subcellularLocation>
</comment>
<comment type="similarity">
    <text evidence="2">Belongs to the eukaryotic release factor 1 family.</text>
</comment>
<organism>
    <name type="scientific">Trypanosoma brucei brucei</name>
    <dbReference type="NCBI Taxonomy" id="5702"/>
    <lineage>
        <taxon>Eukaryota</taxon>
        <taxon>Discoba</taxon>
        <taxon>Euglenozoa</taxon>
        <taxon>Kinetoplastea</taxon>
        <taxon>Metakinetoplastina</taxon>
        <taxon>Trypanosomatida</taxon>
        <taxon>Trypanosomatidae</taxon>
        <taxon>Trypanosoma</taxon>
    </lineage>
</organism>
<feature type="chain" id="PRO_0000143161" description="Eukaryotic peptide chain release factor subunit 1">
    <location>
        <begin position="1"/>
        <end position="452"/>
    </location>
</feature>
<name>ERF1_TRYBB</name>
<reference key="1">
    <citation type="submission" date="2000-06" db="EMBL/GenBank/DDBJ databases">
        <title>Eukaryotic release factor 1 from Trypanosoma brucei.</title>
        <authorList>
            <person name="Jean-Jean O."/>
            <person name="Kervestin S."/>
            <person name="Salhi S."/>
        </authorList>
    </citation>
    <scope>NUCLEOTIDE SEQUENCE [GENOMIC DNA]</scope>
</reference>
<keyword id="KW-0963">Cytoplasm</keyword>
<keyword id="KW-0648">Protein biosynthesis</keyword>
<evidence type="ECO:0000250" key="1"/>
<evidence type="ECO:0000305" key="2"/>